<keyword id="KW-1039">Host endosome</keyword>
<keyword id="KW-1040">Host Golgi apparatus</keyword>
<keyword id="KW-1043">Host membrane</keyword>
<keyword id="KW-0945">Host-virus interaction</keyword>
<keyword id="KW-1080">Inhibition of host adaptive immune response by virus</keyword>
<keyword id="KW-1115">Inhibition of host MHC class I molecule presentation by virus</keyword>
<keyword id="KW-0472">Membrane</keyword>
<keyword id="KW-0479">Metal-binding</keyword>
<keyword id="KW-1128">Modulation of host ubiquitin pathway by viral E3 ligase</keyword>
<keyword id="KW-1130">Modulation of host ubiquitin pathway by virus</keyword>
<keyword id="KW-1185">Reference proteome</keyword>
<keyword id="KW-0808">Transferase</keyword>
<keyword id="KW-0812">Transmembrane</keyword>
<keyword id="KW-1133">Transmembrane helix</keyword>
<keyword id="KW-0833">Ubl conjugation pathway</keyword>
<keyword id="KW-0899">Viral immunoevasion</keyword>
<keyword id="KW-0862">Zinc</keyword>
<keyword id="KW-0863">Zinc-finger</keyword>
<reference key="1">
    <citation type="journal article" date="2003" name="J. Virol.">
        <title>Complete genomic sequence and comparative analysis of the tumorigenic poxvirus Yaba monkey tumor virus.</title>
        <authorList>
            <person name="Brunetti C.R."/>
            <person name="Amano H."/>
            <person name="Ueda Y."/>
            <person name="Qin J."/>
            <person name="Miyamura T."/>
            <person name="Suzuki T."/>
            <person name="Li X."/>
            <person name="Barrett J.W."/>
            <person name="McFadden G."/>
        </authorList>
    </citation>
    <scope>NUCLEOTIDE SEQUENCE [LARGE SCALE GENOMIC DNA]</scope>
</reference>
<sequence length="156" mass="18290">MSNICWICNDTCDERNNFCICSEEYKIVHLKCMQSWINYSKKVECDLCKNKYNIKKSYHYFSRWKWCFSDKKTVLSKILFIFFAVGFIFITTSMSSNVASLVTRIDDTFFDVVFLTVYISMILVTVCLCVFVLALAVDFLLDAKEKNSFLTIKEIV</sequence>
<evidence type="ECO:0000250" key="1"/>
<evidence type="ECO:0000255" key="2"/>
<evidence type="ECO:0000255" key="3">
    <source>
        <dbReference type="PROSITE-ProRule" id="PRU00623"/>
    </source>
</evidence>
<evidence type="ECO:0000305" key="4"/>
<feature type="chain" id="PRO_0000396005" description="E3 ubiquitin-protein ligase LAP">
    <location>
        <begin position="1"/>
        <end position="156"/>
    </location>
</feature>
<feature type="topological domain" description="Cytoplasmic" evidence="2">
    <location>
        <begin position="1"/>
        <end position="73"/>
    </location>
</feature>
<feature type="transmembrane region" description="Helical" evidence="2">
    <location>
        <begin position="74"/>
        <end position="94"/>
    </location>
</feature>
<feature type="topological domain" description="Lumenal" evidence="2">
    <location>
        <begin position="95"/>
        <end position="116"/>
    </location>
</feature>
<feature type="transmembrane region" description="Helical" evidence="2">
    <location>
        <begin position="117"/>
        <end position="137"/>
    </location>
</feature>
<feature type="topological domain" description="Cytoplasmic" evidence="2">
    <location>
        <begin position="138"/>
        <end position="156"/>
    </location>
</feature>
<feature type="zinc finger region" description="RING-CH-type" evidence="3">
    <location>
        <begin position="1"/>
        <end position="55"/>
    </location>
</feature>
<feature type="binding site" evidence="3">
    <location>
        <position position="5"/>
    </location>
    <ligand>
        <name>Zn(2+)</name>
        <dbReference type="ChEBI" id="CHEBI:29105"/>
        <label>1</label>
    </ligand>
</feature>
<feature type="binding site" evidence="3">
    <location>
        <position position="8"/>
    </location>
    <ligand>
        <name>Zn(2+)</name>
        <dbReference type="ChEBI" id="CHEBI:29105"/>
        <label>1</label>
    </ligand>
</feature>
<feature type="binding site" evidence="3">
    <location>
        <position position="19"/>
    </location>
    <ligand>
        <name>Zn(2+)</name>
        <dbReference type="ChEBI" id="CHEBI:29105"/>
        <label>2</label>
    </ligand>
</feature>
<feature type="binding site" evidence="3">
    <location>
        <position position="21"/>
    </location>
    <ligand>
        <name>Zn(2+)</name>
        <dbReference type="ChEBI" id="CHEBI:29105"/>
        <label>2</label>
    </ligand>
</feature>
<feature type="binding site" evidence="3">
    <location>
        <position position="29"/>
    </location>
    <ligand>
        <name>Zn(2+)</name>
        <dbReference type="ChEBI" id="CHEBI:29105"/>
        <label>1</label>
    </ligand>
</feature>
<feature type="binding site" evidence="3">
    <location>
        <position position="32"/>
    </location>
    <ligand>
        <name>Zn(2+)</name>
        <dbReference type="ChEBI" id="CHEBI:29105"/>
        <label>1</label>
    </ligand>
</feature>
<feature type="binding site" evidence="3">
    <location>
        <position position="45"/>
    </location>
    <ligand>
        <name>Zn(2+)</name>
        <dbReference type="ChEBI" id="CHEBI:29105"/>
        <label>2</label>
    </ligand>
</feature>
<feature type="binding site" evidence="3">
    <location>
        <position position="48"/>
    </location>
    <ligand>
        <name>Zn(2+)</name>
        <dbReference type="ChEBI" id="CHEBI:29105"/>
        <label>2</label>
    </ligand>
</feature>
<comment type="function">
    <text evidence="1">E3 ubiquitin-protein ligase which promotes ubiquitination and subsequent degradation of host MHC-I and CD4 molecules, presumably to prevent lysis of infected cells by cytotoxic T-lymphocytes and NK cell. Binds target molecules through transmembrane interaction. The result of this ubiquitination is the enhancement of the endocytosis of the target chain and the delivery to the lysosome, where it is proteolytically destroyed.</text>
</comment>
<comment type="catalytic activity">
    <reaction>
        <text>S-ubiquitinyl-[E2 ubiquitin-conjugating enzyme]-L-cysteine + [acceptor protein]-L-lysine = [E2 ubiquitin-conjugating enzyme]-L-cysteine + N(6)-ubiquitinyl-[acceptor protein]-L-lysine.</text>
        <dbReference type="EC" id="2.3.2.27"/>
    </reaction>
</comment>
<comment type="subcellular location">
    <subcellularLocation>
        <location evidence="4">Host membrane</location>
        <topology evidence="4">Multi-pass membrane protein</topology>
    </subcellularLocation>
    <subcellularLocation>
        <location>Host Golgi apparatus</location>
        <location>Host trans-Golgi network membrane</location>
    </subcellularLocation>
    <subcellularLocation>
        <location evidence="1">Host early endosome membrane</location>
    </subcellularLocation>
</comment>
<comment type="domain">
    <text evidence="3">The RING-CH-type zinc finger domain is required for E3 ligase activity.</text>
</comment>
<comment type="similarity">
    <text evidence="4">Belongs to the poxviridae LAP protein family.</text>
</comment>
<protein>
    <recommendedName>
        <fullName>E3 ubiquitin-protein ligase LAP</fullName>
        <ecNumber>2.3.2.27</ecNumber>
    </recommendedName>
    <alternativeName>
        <fullName>Leukemia associated protein</fullName>
        <shortName>LAP</shortName>
    </alternativeName>
    <alternativeName>
        <fullName evidence="4">RING-type E3 ubiquitin transferase</fullName>
    </alternativeName>
</protein>
<proteinExistence type="inferred from homology"/>
<gene>
    <name type="primary">LAP</name>
    <name type="ORF">5L</name>
</gene>
<organism>
    <name type="scientific">Yaba monkey tumor virus (strain VR587)</name>
    <name type="common">YMTV</name>
    <dbReference type="NCBI Taxonomy" id="928314"/>
    <lineage>
        <taxon>Viruses</taxon>
        <taxon>Varidnaviria</taxon>
        <taxon>Bamfordvirae</taxon>
        <taxon>Nucleocytoviricota</taxon>
        <taxon>Pokkesviricetes</taxon>
        <taxon>Chitovirales</taxon>
        <taxon>Poxviridae</taxon>
        <taxon>Chordopoxvirinae</taxon>
        <taxon>Yatapoxvirus</taxon>
        <taxon>Yaba monkey tumor virus</taxon>
    </lineage>
</organism>
<organismHost>
    <name type="scientific">Erythrocebus patas</name>
    <name type="common">Red guenon</name>
    <name type="synonym">Cercopithecus patas</name>
    <dbReference type="NCBI Taxonomy" id="9538"/>
</organismHost>
<organismHost>
    <name type="scientific">Homo sapiens</name>
    <name type="common">Human</name>
    <dbReference type="NCBI Taxonomy" id="9606"/>
</organismHost>
<organismHost>
    <name type="scientific">Macaca</name>
    <name type="common">macaques</name>
    <dbReference type="NCBI Taxonomy" id="9539"/>
</organismHost>
<organismHost>
    <name type="scientific">Papio hamadryas</name>
    <name type="common">Hamadryas baboon</name>
    <dbReference type="NCBI Taxonomy" id="9557"/>
</organismHost>
<accession>Q6TV02</accession>
<name>LAP_YMTV5</name>
<dbReference type="EC" id="2.3.2.27"/>
<dbReference type="EMBL" id="AY386371">
    <property type="protein sequence ID" value="AAR07367.1"/>
    <property type="molecule type" value="Genomic_DNA"/>
</dbReference>
<dbReference type="RefSeq" id="NP_938266.1">
    <property type="nucleotide sequence ID" value="NC_005179.1"/>
</dbReference>
<dbReference type="SMR" id="Q6TV02"/>
<dbReference type="KEGG" id="vg:2943673"/>
<dbReference type="Proteomes" id="UP000008596">
    <property type="component" value="Segment"/>
</dbReference>
<dbReference type="GO" id="GO:0044174">
    <property type="term" value="C:host cell endosome"/>
    <property type="evidence" value="ECO:0007669"/>
    <property type="project" value="UniProtKB-KW"/>
</dbReference>
<dbReference type="GO" id="GO:0044177">
    <property type="term" value="C:host cell Golgi apparatus"/>
    <property type="evidence" value="ECO:0007669"/>
    <property type="project" value="UniProtKB-SubCell"/>
</dbReference>
<dbReference type="GO" id="GO:0033644">
    <property type="term" value="C:host cell membrane"/>
    <property type="evidence" value="ECO:0007669"/>
    <property type="project" value="UniProtKB-SubCell"/>
</dbReference>
<dbReference type="GO" id="GO:0016020">
    <property type="term" value="C:membrane"/>
    <property type="evidence" value="ECO:0007669"/>
    <property type="project" value="UniProtKB-KW"/>
</dbReference>
<dbReference type="GO" id="GO:0016740">
    <property type="term" value="F:transferase activity"/>
    <property type="evidence" value="ECO:0007669"/>
    <property type="project" value="UniProtKB-KW"/>
</dbReference>
<dbReference type="GO" id="GO:0008270">
    <property type="term" value="F:zinc ion binding"/>
    <property type="evidence" value="ECO:0007669"/>
    <property type="project" value="UniProtKB-KW"/>
</dbReference>
<dbReference type="GO" id="GO:0039648">
    <property type="term" value="P:symbiont-mediated perturbation of host ubiquitin-like protein modification"/>
    <property type="evidence" value="ECO:0007669"/>
    <property type="project" value="UniProtKB-KW"/>
</dbReference>
<dbReference type="GO" id="GO:0046776">
    <property type="term" value="P:symbiont-mediated suppression of host antigen processing and presentation of peptide antigen via MHC class I"/>
    <property type="evidence" value="ECO:0007669"/>
    <property type="project" value="UniProtKB-KW"/>
</dbReference>
<dbReference type="Gene3D" id="3.30.40.10">
    <property type="entry name" value="Zinc/RING finger domain, C3HC4 (zinc finger)"/>
    <property type="match status" value="1"/>
</dbReference>
<dbReference type="InterPro" id="IPR011016">
    <property type="entry name" value="Znf_RING-CH"/>
</dbReference>
<dbReference type="InterPro" id="IPR013083">
    <property type="entry name" value="Znf_RING/FYVE/PHD"/>
</dbReference>
<dbReference type="PANTHER" id="PTHR46065">
    <property type="entry name" value="E3 UBIQUITIN-PROTEIN LIGASE MARCH 2/3 FAMILY MEMBER"/>
    <property type="match status" value="1"/>
</dbReference>
<dbReference type="PANTHER" id="PTHR46065:SF3">
    <property type="entry name" value="FI20425P1"/>
    <property type="match status" value="1"/>
</dbReference>
<dbReference type="Pfam" id="PF12906">
    <property type="entry name" value="RINGv"/>
    <property type="match status" value="1"/>
</dbReference>
<dbReference type="SMART" id="SM00744">
    <property type="entry name" value="RINGv"/>
    <property type="match status" value="1"/>
</dbReference>
<dbReference type="SUPFAM" id="SSF57850">
    <property type="entry name" value="RING/U-box"/>
    <property type="match status" value="1"/>
</dbReference>
<dbReference type="PROSITE" id="PS51292">
    <property type="entry name" value="ZF_RING_CH"/>
    <property type="match status" value="1"/>
</dbReference>